<organism>
    <name type="scientific">Xenopus laevis</name>
    <name type="common">African clawed frog</name>
    <dbReference type="NCBI Taxonomy" id="8355"/>
    <lineage>
        <taxon>Eukaryota</taxon>
        <taxon>Metazoa</taxon>
        <taxon>Chordata</taxon>
        <taxon>Craniata</taxon>
        <taxon>Vertebrata</taxon>
        <taxon>Euteleostomi</taxon>
        <taxon>Amphibia</taxon>
        <taxon>Batrachia</taxon>
        <taxon>Anura</taxon>
        <taxon>Pipoidea</taxon>
        <taxon>Pipidae</taxon>
        <taxon>Xenopodinae</taxon>
        <taxon>Xenopus</taxon>
        <taxon>Xenopus</taxon>
    </lineage>
</organism>
<reference key="1">
    <citation type="journal article" date="1995" name="Development">
        <title>XLPOU 2, a noggin-inducible gene, has direct neuralizing activity.</title>
        <authorList>
            <person name="Witta S.E."/>
            <person name="Agarwal V.R."/>
            <person name="Sato S.M."/>
        </authorList>
    </citation>
    <scope>NUCLEOTIDE SEQUENCE [MRNA]</scope>
    <scope>FUNCTION</scope>
    <scope>TISSUE SPECIFICITY</scope>
    <scope>DEVELOPMENTAL STAGE</scope>
    <scope>INDUCTION</scope>
    <source>
        <tissue>Brain</tissue>
    </source>
</reference>
<reference key="2">
    <citation type="submission" date="2004-07" db="EMBL/GenBank/DDBJ databases">
        <authorList>
            <consortium name="NIH - Xenopus Gene Collection (XGC) project"/>
        </authorList>
    </citation>
    <scope>NUCLEOTIDE SEQUENCE [LARGE SCALE MRNA]</scope>
    <source>
        <tissue>Kidney</tissue>
    </source>
</reference>
<reference key="3">
    <citation type="journal article" date="1991" name="Dev. Biol.">
        <title>XLPOU 1 and XLPOU 2, two novel POU domain genes expressed in the dorsoanterior region of Xenopus embryos.</title>
        <authorList>
            <person name="Agarwal V.R."/>
            <person name="Sato S.M."/>
        </authorList>
    </citation>
    <scope>NUCLEOTIDE SEQUENCE [MRNA] OF 127-361</scope>
    <scope>TISSUE SPECIFICITY</scope>
    <scope>DEVELOPMENTAL STAGE</scope>
    <source>
        <tissue>Brain</tissue>
    </source>
</reference>
<reference key="4">
    <citation type="journal article" date="1999" name="Mech. Dev.">
        <title>The POU domain gene, XlPOU 2 is an essential downstream determinant of neural induction.</title>
        <authorList>
            <person name="Matsuo-Takasaki M."/>
            <person name="Lim J.H."/>
            <person name="Sato S.M."/>
        </authorList>
    </citation>
    <scope>FUNCTION</scope>
    <scope>INDUCTION</scope>
</reference>
<evidence type="ECO:0000255" key="1">
    <source>
        <dbReference type="PROSITE-ProRule" id="PRU00108"/>
    </source>
</evidence>
<evidence type="ECO:0000255" key="2">
    <source>
        <dbReference type="PROSITE-ProRule" id="PRU00530"/>
    </source>
</evidence>
<evidence type="ECO:0000256" key="3">
    <source>
        <dbReference type="SAM" id="MobiDB-lite"/>
    </source>
</evidence>
<evidence type="ECO:0000269" key="4">
    <source>
    </source>
</evidence>
<evidence type="ECO:0000269" key="5">
    <source>
    </source>
</evidence>
<evidence type="ECO:0000269" key="6">
    <source>
    </source>
</evidence>
<evidence type="ECO:0000305" key="7"/>
<name>P3F4A_XENLA</name>
<dbReference type="EMBL" id="U17654">
    <property type="protein sequence ID" value="AAA92684.1"/>
    <property type="molecule type" value="mRNA"/>
</dbReference>
<dbReference type="EMBL" id="BC076747">
    <property type="protein sequence ID" value="AAH76747.1"/>
    <property type="molecule type" value="mRNA"/>
</dbReference>
<dbReference type="EMBL" id="X59055">
    <property type="protein sequence ID" value="CAA41781.1"/>
    <property type="status" value="ALT_INIT"/>
    <property type="molecule type" value="mRNA"/>
</dbReference>
<dbReference type="RefSeq" id="NP_001094393.1">
    <property type="nucleotide sequence ID" value="NM_001100923.1"/>
</dbReference>
<dbReference type="SMR" id="P31364"/>
<dbReference type="DNASU" id="397929"/>
<dbReference type="GeneID" id="397929"/>
<dbReference type="KEGG" id="xla:397929"/>
<dbReference type="AGR" id="Xenbase:XB-GENE-865294"/>
<dbReference type="CTD" id="397929"/>
<dbReference type="Xenbase" id="XB-GENE-865294">
    <property type="gene designation" value="pou3f4.L"/>
</dbReference>
<dbReference type="OMA" id="QHEVYSH"/>
<dbReference type="OrthoDB" id="6358449at2759"/>
<dbReference type="Proteomes" id="UP000186698">
    <property type="component" value="Chromosome 8L"/>
</dbReference>
<dbReference type="Bgee" id="397929">
    <property type="expression patterns" value="Expressed in internal ear and 5 other cell types or tissues"/>
</dbReference>
<dbReference type="GO" id="GO:0005634">
    <property type="term" value="C:nucleus"/>
    <property type="evidence" value="ECO:0007669"/>
    <property type="project" value="UniProtKB-SubCell"/>
</dbReference>
<dbReference type="GO" id="GO:0000981">
    <property type="term" value="F:DNA-binding transcription factor activity, RNA polymerase II-specific"/>
    <property type="evidence" value="ECO:0000318"/>
    <property type="project" value="GO_Central"/>
</dbReference>
<dbReference type="GO" id="GO:0000978">
    <property type="term" value="F:RNA polymerase II cis-regulatory region sequence-specific DNA binding"/>
    <property type="evidence" value="ECO:0000318"/>
    <property type="project" value="GO_Central"/>
</dbReference>
<dbReference type="GO" id="GO:0007420">
    <property type="term" value="P:brain development"/>
    <property type="evidence" value="ECO:0007669"/>
    <property type="project" value="InterPro"/>
</dbReference>
<dbReference type="GO" id="GO:0006357">
    <property type="term" value="P:regulation of transcription by RNA polymerase II"/>
    <property type="evidence" value="ECO:0000318"/>
    <property type="project" value="GO_Central"/>
</dbReference>
<dbReference type="CDD" id="cd00086">
    <property type="entry name" value="homeodomain"/>
    <property type="match status" value="1"/>
</dbReference>
<dbReference type="FunFam" id="1.10.10.60:FF:000005">
    <property type="entry name" value="POU domain protein"/>
    <property type="match status" value="1"/>
</dbReference>
<dbReference type="FunFam" id="1.10.260.40:FF:000001">
    <property type="entry name" value="POU domain protein"/>
    <property type="match status" value="1"/>
</dbReference>
<dbReference type="Gene3D" id="1.10.10.60">
    <property type="entry name" value="Homeodomain-like"/>
    <property type="match status" value="1"/>
</dbReference>
<dbReference type="Gene3D" id="1.10.260.40">
    <property type="entry name" value="lambda repressor-like DNA-binding domains"/>
    <property type="match status" value="1"/>
</dbReference>
<dbReference type="InterPro" id="IPR001356">
    <property type="entry name" value="HD"/>
</dbReference>
<dbReference type="InterPro" id="IPR017970">
    <property type="entry name" value="Homeobox_CS"/>
</dbReference>
<dbReference type="InterPro" id="IPR009057">
    <property type="entry name" value="Homeodomain-like_sf"/>
</dbReference>
<dbReference type="InterPro" id="IPR010982">
    <property type="entry name" value="Lambda_DNA-bd_dom_sf"/>
</dbReference>
<dbReference type="InterPro" id="IPR013847">
    <property type="entry name" value="POU"/>
</dbReference>
<dbReference type="InterPro" id="IPR000327">
    <property type="entry name" value="POU_dom"/>
</dbReference>
<dbReference type="InterPro" id="IPR050255">
    <property type="entry name" value="POU_domain_TF"/>
</dbReference>
<dbReference type="InterPro" id="IPR016362">
    <property type="entry name" value="TF_POU_3"/>
</dbReference>
<dbReference type="PANTHER" id="PTHR11636">
    <property type="entry name" value="POU DOMAIN"/>
    <property type="match status" value="1"/>
</dbReference>
<dbReference type="PANTHER" id="PTHR11636:SF83">
    <property type="entry name" value="POU DOMAIN, CLASS 3, TRANSCRIPTION FACTOR 4"/>
    <property type="match status" value="1"/>
</dbReference>
<dbReference type="Pfam" id="PF00046">
    <property type="entry name" value="Homeodomain"/>
    <property type="match status" value="1"/>
</dbReference>
<dbReference type="Pfam" id="PF00157">
    <property type="entry name" value="Pou"/>
    <property type="match status" value="1"/>
</dbReference>
<dbReference type="PIRSF" id="PIRSF002629">
    <property type="entry name" value="Transcription_factor_POU"/>
    <property type="match status" value="1"/>
</dbReference>
<dbReference type="PRINTS" id="PR00028">
    <property type="entry name" value="POUDOMAIN"/>
</dbReference>
<dbReference type="SMART" id="SM00389">
    <property type="entry name" value="HOX"/>
    <property type="match status" value="1"/>
</dbReference>
<dbReference type="SMART" id="SM00352">
    <property type="entry name" value="POU"/>
    <property type="match status" value="1"/>
</dbReference>
<dbReference type="SUPFAM" id="SSF46689">
    <property type="entry name" value="Homeodomain-like"/>
    <property type="match status" value="1"/>
</dbReference>
<dbReference type="SUPFAM" id="SSF47413">
    <property type="entry name" value="lambda repressor-like DNA-binding domains"/>
    <property type="match status" value="1"/>
</dbReference>
<dbReference type="PROSITE" id="PS00027">
    <property type="entry name" value="HOMEOBOX_1"/>
    <property type="match status" value="1"/>
</dbReference>
<dbReference type="PROSITE" id="PS50071">
    <property type="entry name" value="HOMEOBOX_2"/>
    <property type="match status" value="1"/>
</dbReference>
<dbReference type="PROSITE" id="PS00035">
    <property type="entry name" value="POU_1"/>
    <property type="match status" value="1"/>
</dbReference>
<dbReference type="PROSITE" id="PS00465">
    <property type="entry name" value="POU_2"/>
    <property type="match status" value="1"/>
</dbReference>
<dbReference type="PROSITE" id="PS51179">
    <property type="entry name" value="POU_3"/>
    <property type="match status" value="1"/>
</dbReference>
<keyword id="KW-0010">Activator</keyword>
<keyword id="KW-0217">Developmental protein</keyword>
<keyword id="KW-0238">DNA-binding</keyword>
<keyword id="KW-0371">Homeobox</keyword>
<keyword id="KW-0539">Nucleus</keyword>
<keyword id="KW-1185">Reference proteome</keyword>
<keyword id="KW-0804">Transcription</keyword>
<keyword id="KW-0805">Transcription regulation</keyword>
<comment type="function">
    <text evidence="4 6">Transcriptional activator. Induces neural-specific gene expression to act as a key regulator of neural differentiation.</text>
</comment>
<comment type="subcellular location">
    <subcellularLocation>
        <location>Nucleus</location>
    </subcellularLocation>
</comment>
<comment type="tissue specificity">
    <text evidence="5 6">From embryonic stage 10, expressed in the Spemann's organizer. During gastrulation, expressed in both the involuting mesoderm and the overlying neuroectoderm. During the neural plate and neural fold stages, expressed in the entire neuroectoderm with expression in discrete regions of the developing nervous system persisting at later stages. Transiently expressed in the pronephros from stages 24-32. In adults, expressed in the kidney and brain.</text>
</comment>
<comment type="developmental stage">
    <text evidence="5 6">First expressed at embryonic stage 9, with expression increasing at neurula stage and again at the tailbud stage. Expression persists through development to adulthood.</text>
</comment>
<comment type="induction">
    <text evidence="4 6">By nog, zic1 and zic3.</text>
</comment>
<comment type="similarity">
    <text evidence="7">Belongs to the POU transcription factor family. Class-3 subfamily.</text>
</comment>
<comment type="sequence caution" evidence="7">
    <conflict type="erroneous initiation">
        <sequence resource="EMBL-CDS" id="CAA41781"/>
    </conflict>
</comment>
<accession>P31364</accession>
<accession>Q6DFJ0</accession>
<protein>
    <recommendedName>
        <fullName>POU domain, class 3, transcription factor 4-A</fullName>
    </recommendedName>
    <alternativeName>
        <fullName>Transcription factor POU2</fullName>
        <shortName>XlPOU 2</shortName>
        <shortName>XlPOU2</shortName>
    </alternativeName>
</protein>
<sequence>MATAASNPYSILSSSSLVHADSAVMQQGSPFRNPQKLLQSDYLQGVPCNGHPLGHHWVTSLSDANPWSSSLASSPLDQQDIKPGREDLQLGAIIHHRSPHVNHHSPHTNHPNAWGASPAHNSSLTSSGQPINIYSQPSFTVSGMLDHGELTPPLPAGTTQSLHPVLREPNDHVDLGSHHCQDHSDEETPTSDELEQFAKQFKQRRIKLGFTQADVGLALGTLYGNVFSQTTICRFEALQLSFKNMCKLKPLLNKWLEEADSSTGNPTSIDKIAAQGRKRKKRTSIEVSVKGVLETHFLKCPKPAALEITSLADSLQLEKEVVRVWFCNRRQKEKRMTPPGDPQQHEVYSHSVKTDTSCNEL</sequence>
<feature type="chain" id="PRO_0000100765" description="POU domain, class 3, transcription factor 4-A">
    <location>
        <begin position="1"/>
        <end position="361"/>
    </location>
</feature>
<feature type="domain" description="POU-specific" evidence="2">
    <location>
        <begin position="186"/>
        <end position="260"/>
    </location>
</feature>
<feature type="DNA-binding region" description="Homeobox" evidence="1">
    <location>
        <begin position="278"/>
        <end position="337"/>
    </location>
</feature>
<feature type="region of interest" description="Disordered" evidence="3">
    <location>
        <begin position="100"/>
        <end position="131"/>
    </location>
</feature>
<feature type="region of interest" description="Disordered" evidence="3">
    <location>
        <begin position="150"/>
        <end position="189"/>
    </location>
</feature>
<feature type="region of interest" description="Disordered" evidence="3">
    <location>
        <begin position="333"/>
        <end position="361"/>
    </location>
</feature>
<feature type="compositionally biased region" description="Polar residues" evidence="3">
    <location>
        <begin position="119"/>
        <end position="131"/>
    </location>
</feature>
<feature type="compositionally biased region" description="Basic and acidic residues" evidence="3">
    <location>
        <begin position="165"/>
        <end position="183"/>
    </location>
</feature>
<feature type="sequence conflict" description="In Ref. 3; CAA41781." evidence="7" ref="3">
    <original>S</original>
    <variation>G</variation>
    <location>
        <position position="127"/>
    </location>
</feature>
<gene>
    <name type="primary">pou3f4-a</name>
    <name type="synonym">pou2</name>
    <name type="synonym">pou3f4</name>
</gene>
<proteinExistence type="evidence at transcript level"/>